<keyword id="KW-0028">Amino-acid biosynthesis</keyword>
<keyword id="KW-0368">Histidine biosynthesis</keyword>
<keyword id="KW-0378">Hydrolase</keyword>
<keyword id="KW-0486">Methionine biosynthesis</keyword>
<keyword id="KW-0511">Multifunctional enzyme</keyword>
<keyword id="KW-0521">NADP</keyword>
<keyword id="KW-0554">One-carbon metabolism</keyword>
<keyword id="KW-0560">Oxidoreductase</keyword>
<keyword id="KW-0658">Purine biosynthesis</keyword>
<gene>
    <name evidence="1" type="primary">folD</name>
    <name type="ordered locus">Mbur_1814</name>
</gene>
<accession>Q12V26</accession>
<organism>
    <name type="scientific">Methanococcoides burtonii (strain DSM 6242 / NBRC 107633 / OCM 468 / ACE-M)</name>
    <dbReference type="NCBI Taxonomy" id="259564"/>
    <lineage>
        <taxon>Archaea</taxon>
        <taxon>Methanobacteriati</taxon>
        <taxon>Methanobacteriota</taxon>
        <taxon>Stenosarchaea group</taxon>
        <taxon>Methanomicrobia</taxon>
        <taxon>Methanosarcinales</taxon>
        <taxon>Methanosarcinaceae</taxon>
        <taxon>Methanococcoides</taxon>
    </lineage>
</organism>
<comment type="function">
    <text evidence="1">Catalyzes the oxidation of 5,10-methylenetetrahydrofolate to 5,10-methenyltetrahydrofolate and then the hydrolysis of 5,10-methenyltetrahydrofolate to 10-formyltetrahydrofolate.</text>
</comment>
<comment type="catalytic activity">
    <reaction evidence="1">
        <text>(6R)-5,10-methylene-5,6,7,8-tetrahydrofolate + NADP(+) = (6R)-5,10-methenyltetrahydrofolate + NADPH</text>
        <dbReference type="Rhea" id="RHEA:22812"/>
        <dbReference type="ChEBI" id="CHEBI:15636"/>
        <dbReference type="ChEBI" id="CHEBI:57455"/>
        <dbReference type="ChEBI" id="CHEBI:57783"/>
        <dbReference type="ChEBI" id="CHEBI:58349"/>
        <dbReference type="EC" id="1.5.1.5"/>
    </reaction>
</comment>
<comment type="catalytic activity">
    <reaction evidence="1">
        <text>(6R)-5,10-methenyltetrahydrofolate + H2O = (6R)-10-formyltetrahydrofolate + H(+)</text>
        <dbReference type="Rhea" id="RHEA:23700"/>
        <dbReference type="ChEBI" id="CHEBI:15377"/>
        <dbReference type="ChEBI" id="CHEBI:15378"/>
        <dbReference type="ChEBI" id="CHEBI:57455"/>
        <dbReference type="ChEBI" id="CHEBI:195366"/>
        <dbReference type="EC" id="3.5.4.9"/>
    </reaction>
</comment>
<comment type="pathway">
    <text evidence="1">One-carbon metabolism; tetrahydrofolate interconversion.</text>
</comment>
<comment type="subunit">
    <text evidence="1">Homodimer.</text>
</comment>
<comment type="similarity">
    <text evidence="1">Belongs to the tetrahydrofolate dehydrogenase/cyclohydrolase family.</text>
</comment>
<dbReference type="EC" id="1.5.1.5" evidence="1"/>
<dbReference type="EC" id="3.5.4.9" evidence="1"/>
<dbReference type="EMBL" id="CP000300">
    <property type="protein sequence ID" value="ABE52700.1"/>
    <property type="molecule type" value="Genomic_DNA"/>
</dbReference>
<dbReference type="RefSeq" id="WP_011499843.1">
    <property type="nucleotide sequence ID" value="NC_007955.1"/>
</dbReference>
<dbReference type="SMR" id="Q12V26"/>
<dbReference type="STRING" id="259564.Mbur_1814"/>
<dbReference type="GeneID" id="3997941"/>
<dbReference type="KEGG" id="mbu:Mbur_1814"/>
<dbReference type="HOGENOM" id="CLU_034045_2_1_2"/>
<dbReference type="OrthoDB" id="9455at2157"/>
<dbReference type="UniPathway" id="UPA00193"/>
<dbReference type="Proteomes" id="UP000001979">
    <property type="component" value="Chromosome"/>
</dbReference>
<dbReference type="GO" id="GO:0005829">
    <property type="term" value="C:cytosol"/>
    <property type="evidence" value="ECO:0007669"/>
    <property type="project" value="TreeGrafter"/>
</dbReference>
<dbReference type="GO" id="GO:0004477">
    <property type="term" value="F:methenyltetrahydrofolate cyclohydrolase activity"/>
    <property type="evidence" value="ECO:0007669"/>
    <property type="project" value="UniProtKB-UniRule"/>
</dbReference>
<dbReference type="GO" id="GO:0004488">
    <property type="term" value="F:methylenetetrahydrofolate dehydrogenase (NADP+) activity"/>
    <property type="evidence" value="ECO:0007669"/>
    <property type="project" value="UniProtKB-UniRule"/>
</dbReference>
<dbReference type="GO" id="GO:0000105">
    <property type="term" value="P:L-histidine biosynthetic process"/>
    <property type="evidence" value="ECO:0007669"/>
    <property type="project" value="UniProtKB-KW"/>
</dbReference>
<dbReference type="GO" id="GO:0009086">
    <property type="term" value="P:methionine biosynthetic process"/>
    <property type="evidence" value="ECO:0007669"/>
    <property type="project" value="UniProtKB-KW"/>
</dbReference>
<dbReference type="GO" id="GO:0006164">
    <property type="term" value="P:purine nucleotide biosynthetic process"/>
    <property type="evidence" value="ECO:0007669"/>
    <property type="project" value="UniProtKB-KW"/>
</dbReference>
<dbReference type="GO" id="GO:0035999">
    <property type="term" value="P:tetrahydrofolate interconversion"/>
    <property type="evidence" value="ECO:0007669"/>
    <property type="project" value="UniProtKB-UniRule"/>
</dbReference>
<dbReference type="CDD" id="cd01080">
    <property type="entry name" value="NAD_bind_m-THF_DH_Cyclohyd"/>
    <property type="match status" value="1"/>
</dbReference>
<dbReference type="FunFam" id="3.40.50.720:FF:000094">
    <property type="entry name" value="Bifunctional protein FolD"/>
    <property type="match status" value="1"/>
</dbReference>
<dbReference type="FunFam" id="3.40.50.10860:FF:000005">
    <property type="entry name" value="C-1-tetrahydrofolate synthase, cytoplasmic, putative"/>
    <property type="match status" value="1"/>
</dbReference>
<dbReference type="Gene3D" id="3.40.50.10860">
    <property type="entry name" value="Leucine Dehydrogenase, chain A, domain 1"/>
    <property type="match status" value="1"/>
</dbReference>
<dbReference type="Gene3D" id="3.40.50.720">
    <property type="entry name" value="NAD(P)-binding Rossmann-like Domain"/>
    <property type="match status" value="1"/>
</dbReference>
<dbReference type="HAMAP" id="MF_01576">
    <property type="entry name" value="THF_DHG_CYH"/>
    <property type="match status" value="1"/>
</dbReference>
<dbReference type="InterPro" id="IPR046346">
    <property type="entry name" value="Aminoacid_DH-like_N_sf"/>
</dbReference>
<dbReference type="InterPro" id="IPR036291">
    <property type="entry name" value="NAD(P)-bd_dom_sf"/>
</dbReference>
<dbReference type="InterPro" id="IPR000672">
    <property type="entry name" value="THF_DH/CycHdrlase"/>
</dbReference>
<dbReference type="InterPro" id="IPR020630">
    <property type="entry name" value="THF_DH/CycHdrlase_cat_dom"/>
</dbReference>
<dbReference type="InterPro" id="IPR020631">
    <property type="entry name" value="THF_DH/CycHdrlase_NAD-bd_dom"/>
</dbReference>
<dbReference type="NCBIfam" id="NF010773">
    <property type="entry name" value="PRK14176.1"/>
    <property type="match status" value="1"/>
</dbReference>
<dbReference type="PANTHER" id="PTHR48099:SF5">
    <property type="entry name" value="C-1-TETRAHYDROFOLATE SYNTHASE, CYTOPLASMIC"/>
    <property type="match status" value="1"/>
</dbReference>
<dbReference type="PANTHER" id="PTHR48099">
    <property type="entry name" value="C-1-TETRAHYDROFOLATE SYNTHASE, CYTOPLASMIC-RELATED"/>
    <property type="match status" value="1"/>
</dbReference>
<dbReference type="Pfam" id="PF00763">
    <property type="entry name" value="THF_DHG_CYH"/>
    <property type="match status" value="1"/>
</dbReference>
<dbReference type="Pfam" id="PF02882">
    <property type="entry name" value="THF_DHG_CYH_C"/>
    <property type="match status" value="1"/>
</dbReference>
<dbReference type="PRINTS" id="PR00085">
    <property type="entry name" value="THFDHDRGNASE"/>
</dbReference>
<dbReference type="SUPFAM" id="SSF53223">
    <property type="entry name" value="Aminoacid dehydrogenase-like, N-terminal domain"/>
    <property type="match status" value="1"/>
</dbReference>
<dbReference type="SUPFAM" id="SSF51735">
    <property type="entry name" value="NAD(P)-binding Rossmann-fold domains"/>
    <property type="match status" value="1"/>
</dbReference>
<protein>
    <recommendedName>
        <fullName evidence="1">Bifunctional protein FolD</fullName>
    </recommendedName>
    <domain>
        <recommendedName>
            <fullName evidence="1">Methylenetetrahydrofolate dehydrogenase</fullName>
            <ecNumber evidence="1">1.5.1.5</ecNumber>
        </recommendedName>
    </domain>
    <domain>
        <recommendedName>
            <fullName evidence="1">Methenyltetrahydrofolate cyclohydrolase</fullName>
            <ecNumber evidence="1">3.5.4.9</ecNumber>
        </recommendedName>
    </domain>
</protein>
<feature type="chain" id="PRO_0000268582" description="Bifunctional protein FolD">
    <location>
        <begin position="1"/>
        <end position="286"/>
    </location>
</feature>
<feature type="binding site" evidence="1">
    <location>
        <begin position="170"/>
        <end position="172"/>
    </location>
    <ligand>
        <name>NADP(+)</name>
        <dbReference type="ChEBI" id="CHEBI:58349"/>
    </ligand>
</feature>
<feature type="binding site" evidence="1">
    <location>
        <position position="236"/>
    </location>
    <ligand>
        <name>NADP(+)</name>
        <dbReference type="ChEBI" id="CHEBI:58349"/>
    </ligand>
</feature>
<reference key="1">
    <citation type="journal article" date="2009" name="ISME J.">
        <title>The genome sequence of the psychrophilic archaeon, Methanococcoides burtonii: the role of genome evolution in cold adaptation.</title>
        <authorList>
            <person name="Allen M.A."/>
            <person name="Lauro F.M."/>
            <person name="Williams T.J."/>
            <person name="Burg D."/>
            <person name="Siddiqui K.S."/>
            <person name="De Francisci D."/>
            <person name="Chong K.W."/>
            <person name="Pilak O."/>
            <person name="Chew H.H."/>
            <person name="De Maere M.Z."/>
            <person name="Ting L."/>
            <person name="Katrib M."/>
            <person name="Ng C."/>
            <person name="Sowers K.R."/>
            <person name="Galperin M.Y."/>
            <person name="Anderson I.J."/>
            <person name="Ivanova N."/>
            <person name="Dalin E."/>
            <person name="Martinez M."/>
            <person name="Lapidus A."/>
            <person name="Hauser L."/>
            <person name="Land M."/>
            <person name="Thomas T."/>
            <person name="Cavicchioli R."/>
        </authorList>
    </citation>
    <scope>NUCLEOTIDE SEQUENCE [LARGE SCALE GENOMIC DNA]</scope>
    <source>
        <strain>DSM 6242 / NBRC 107633 / OCM 468 / ACE-M</strain>
    </source>
</reference>
<evidence type="ECO:0000255" key="1">
    <source>
        <dbReference type="HAMAP-Rule" id="MF_01576"/>
    </source>
</evidence>
<sequence>MPDTDNTKIIDGRAIAKKVEAEVKADVERLVREKGITPGLSAILVGEDPASKMYVRLKHKACGRVGIFAEDQHLPEDITQEELLEAISSLNARKDIHGILLQLPLPKHLNEQEAMNAIDPAKDADGFHPFNMGQLLIGVEELVPCTPKGIIRALEEYGVEIQGKHAVIVGHSNVVGKPMAAMLVNRNATVSICHVFTKDVTKFTRDADILVVATGVKHLIKEDMVKEGSVIFDVGITEENGKVYGDVDFENVIKKASRVTPVPGGVGPVTIATLMQHVLMSAQKTA</sequence>
<name>FOLD_METBU</name>
<proteinExistence type="inferred from homology"/>